<name>AFP2S_MALPA</name>
<keyword id="KW-0044">Antibiotic</keyword>
<keyword id="KW-0929">Antimicrobial</keyword>
<keyword id="KW-0903">Direct protein sequencing</keyword>
<keyword id="KW-0295">Fungicide</keyword>
<protein>
    <recommendedName>
        <fullName>Antifungal protein 2 small subunit</fullName>
    </recommendedName>
    <alternativeName>
        <fullName>CW-2</fullName>
    </alternativeName>
</protein>
<sequence length="16" mass="2027">SDYSRKRDPPQKYEEE</sequence>
<proteinExistence type="evidence at protein level"/>
<evidence type="ECO:0000269" key="1">
    <source>
    </source>
</evidence>
<evidence type="ECO:0000303" key="2">
    <source>
    </source>
</evidence>
<evidence type="ECO:0000305" key="3"/>
<dbReference type="GO" id="GO:0042742">
    <property type="term" value="P:defense response to bacterium"/>
    <property type="evidence" value="ECO:0007669"/>
    <property type="project" value="UniProtKB-KW"/>
</dbReference>
<dbReference type="GO" id="GO:0050832">
    <property type="term" value="P:defense response to fungus"/>
    <property type="evidence" value="ECO:0000314"/>
    <property type="project" value="UniProtKB"/>
</dbReference>
<dbReference type="GO" id="GO:0031640">
    <property type="term" value="P:killing of cells of another organism"/>
    <property type="evidence" value="ECO:0007669"/>
    <property type="project" value="UniProtKB-KW"/>
</dbReference>
<dbReference type="GO" id="GO:0006805">
    <property type="term" value="P:xenobiotic metabolic process"/>
    <property type="evidence" value="ECO:0000314"/>
    <property type="project" value="UniProtKB"/>
</dbReference>
<comment type="function">
    <text evidence="1">Possesses antifungal activity against P.infestans but not F.graminearum.</text>
</comment>
<comment type="subunit">
    <text evidence="1">Heterodimer of a large and a small subunit.</text>
</comment>
<comment type="miscellaneous">
    <text evidence="1">Antimicrobial activity is not affected by salt concentration.</text>
</comment>
<feature type="chain" id="PRO_0000064481" description="Antifungal protein 2 small subunit">
    <location>
        <begin position="1"/>
        <end position="16" status="greater than"/>
    </location>
</feature>
<feature type="non-terminal residue" evidence="2">
    <location>
        <position position="16"/>
    </location>
</feature>
<reference evidence="3" key="1">
    <citation type="journal article" date="2000" name="Biochem. Biophys. Res. Commun.">
        <title>Potent heterologous antifungal proteins from cheeseweed (Malva parviflora).</title>
        <authorList>
            <person name="Wang X."/>
            <person name="Bunkers G.J."/>
        </authorList>
    </citation>
    <scope>PROTEIN SEQUENCE</scope>
    <scope>FUNCTION</scope>
    <source>
        <tissue>Seed</tissue>
    </source>
</reference>
<organism evidence="3">
    <name type="scientific">Malva parviflora</name>
    <name type="common">Little mallow</name>
    <name type="synonym">Cheeseweed mallow</name>
    <dbReference type="NCBI Taxonomy" id="145753"/>
    <lineage>
        <taxon>Eukaryota</taxon>
        <taxon>Viridiplantae</taxon>
        <taxon>Streptophyta</taxon>
        <taxon>Embryophyta</taxon>
        <taxon>Tracheophyta</taxon>
        <taxon>Spermatophyta</taxon>
        <taxon>Magnoliopsida</taxon>
        <taxon>eudicotyledons</taxon>
        <taxon>Gunneridae</taxon>
        <taxon>Pentapetalae</taxon>
        <taxon>rosids</taxon>
        <taxon>malvids</taxon>
        <taxon>Malvales</taxon>
        <taxon>Malvaceae</taxon>
        <taxon>Malvoideae</taxon>
        <taxon>Malva</taxon>
    </lineage>
</organism>
<accession>P83142</accession>